<proteinExistence type="evidence at protein level"/>
<keyword id="KW-0007">Acetylation</keyword>
<keyword id="KW-0963">Cytoplasm</keyword>
<keyword id="KW-0328">Glycosyltransferase</keyword>
<keyword id="KW-0539">Nucleus</keyword>
<keyword id="KW-0660">Purine salvage</keyword>
<keyword id="KW-1185">Reference proteome</keyword>
<keyword id="KW-0808">Transferase</keyword>
<gene>
    <name evidence="2" type="primary">MTAP</name>
</gene>
<evidence type="ECO:0000250" key="1">
    <source>
        <dbReference type="UniProtKB" id="Q9CQ65"/>
    </source>
</evidence>
<evidence type="ECO:0000255" key="2">
    <source>
        <dbReference type="HAMAP-Rule" id="MF_03155"/>
    </source>
</evidence>
<evidence type="ECO:0000269" key="3">
    <source>
    </source>
</evidence>
<protein>
    <recommendedName>
        <fullName evidence="2">S-methyl-5'-thioadenosine phosphorylase</fullName>
        <ecNumber evidence="2">2.4.2.28</ecNumber>
    </recommendedName>
    <alternativeName>
        <fullName evidence="2">5'-methylthioadenosine phosphorylase</fullName>
        <shortName evidence="2">MTA phosphorylase</shortName>
        <shortName evidence="2">MTAP</shortName>
        <shortName evidence="2">MTAPase</shortName>
    </alternativeName>
</protein>
<name>MTAP_BOVIN</name>
<dbReference type="EC" id="2.4.2.28" evidence="2"/>
<dbReference type="EMBL" id="DAAA02022238">
    <property type="status" value="NOT_ANNOTATED_CDS"/>
    <property type="molecule type" value="Genomic_DNA"/>
</dbReference>
<dbReference type="EMBL" id="BC105254">
    <property type="protein sequence ID" value="AAI05255.1"/>
    <property type="molecule type" value="mRNA"/>
</dbReference>
<dbReference type="RefSeq" id="XP_002689552.1">
    <property type="nucleotide sequence ID" value="XM_002689506.7"/>
</dbReference>
<dbReference type="RefSeq" id="XP_015319924.1">
    <property type="nucleotide sequence ID" value="XM_015464438.1"/>
</dbReference>
<dbReference type="SMR" id="Q3MHF7"/>
<dbReference type="FunCoup" id="Q3MHF7">
    <property type="interactions" value="2592"/>
</dbReference>
<dbReference type="STRING" id="9913.ENSBTAP00000045533"/>
<dbReference type="PaxDb" id="9913-ENSBTAP00000045533"/>
<dbReference type="Ensembl" id="ENSBTAT00000110113.1">
    <property type="protein sequence ID" value="ENSBTAP00000075535.1"/>
    <property type="gene ID" value="ENSBTAG00000025929.6"/>
</dbReference>
<dbReference type="GeneID" id="782907"/>
<dbReference type="KEGG" id="bta:782907"/>
<dbReference type="CTD" id="4507"/>
<dbReference type="VEuPathDB" id="HostDB:ENSBTAG00000025929"/>
<dbReference type="eggNOG" id="KOG3985">
    <property type="taxonomic scope" value="Eukaryota"/>
</dbReference>
<dbReference type="GeneTree" id="ENSGT00950000182991"/>
<dbReference type="InParanoid" id="Q3MHF7"/>
<dbReference type="OMA" id="ADPFCPE"/>
<dbReference type="OrthoDB" id="431409at2759"/>
<dbReference type="Reactome" id="R-BTA-1237112">
    <property type="pathway name" value="Methionine salvage pathway"/>
</dbReference>
<dbReference type="UniPathway" id="UPA00904">
    <property type="reaction ID" value="UER00873"/>
</dbReference>
<dbReference type="Proteomes" id="UP000009136">
    <property type="component" value="Chromosome 8"/>
</dbReference>
<dbReference type="Bgee" id="ENSBTAG00000025929">
    <property type="expression patterns" value="Expressed in conceptus and 106 other cell types or tissues"/>
</dbReference>
<dbReference type="GO" id="GO:0005829">
    <property type="term" value="C:cytosol"/>
    <property type="evidence" value="ECO:0000318"/>
    <property type="project" value="GO_Central"/>
</dbReference>
<dbReference type="GO" id="GO:0005634">
    <property type="term" value="C:nucleus"/>
    <property type="evidence" value="ECO:0007669"/>
    <property type="project" value="UniProtKB-SubCell"/>
</dbReference>
<dbReference type="GO" id="GO:0017061">
    <property type="term" value="F:S-methyl-5-thioadenosine phosphorylase activity"/>
    <property type="evidence" value="ECO:0000318"/>
    <property type="project" value="GO_Central"/>
</dbReference>
<dbReference type="GO" id="GO:0019509">
    <property type="term" value="P:L-methionine salvage from methylthioadenosine"/>
    <property type="evidence" value="ECO:0000318"/>
    <property type="project" value="GO_Central"/>
</dbReference>
<dbReference type="GO" id="GO:0006166">
    <property type="term" value="P:purine ribonucleoside salvage"/>
    <property type="evidence" value="ECO:0007669"/>
    <property type="project" value="UniProtKB-KW"/>
</dbReference>
<dbReference type="CDD" id="cd09010">
    <property type="entry name" value="MTAP_SsMTAPII_like_MTIP"/>
    <property type="match status" value="1"/>
</dbReference>
<dbReference type="FunFam" id="3.40.50.1580:FF:000006">
    <property type="entry name" value="Purine nucleoside phosphorylase"/>
    <property type="match status" value="1"/>
</dbReference>
<dbReference type="Gene3D" id="3.40.50.1580">
    <property type="entry name" value="Nucleoside phosphorylase domain"/>
    <property type="match status" value="1"/>
</dbReference>
<dbReference type="HAMAP" id="MF_01963">
    <property type="entry name" value="MTAP"/>
    <property type="match status" value="1"/>
</dbReference>
<dbReference type="InterPro" id="IPR010044">
    <property type="entry name" value="MTAP"/>
</dbReference>
<dbReference type="InterPro" id="IPR000845">
    <property type="entry name" value="Nucleoside_phosphorylase_d"/>
</dbReference>
<dbReference type="InterPro" id="IPR035994">
    <property type="entry name" value="Nucleoside_phosphorylase_sf"/>
</dbReference>
<dbReference type="InterPro" id="IPR018099">
    <property type="entry name" value="Purine_phosphorylase-2_CS"/>
</dbReference>
<dbReference type="NCBIfam" id="TIGR01694">
    <property type="entry name" value="MTAP"/>
    <property type="match status" value="1"/>
</dbReference>
<dbReference type="PANTHER" id="PTHR42679">
    <property type="entry name" value="S-METHYL-5'-THIOADENOSINE PHOSPHORYLASE"/>
    <property type="match status" value="1"/>
</dbReference>
<dbReference type="PANTHER" id="PTHR42679:SF2">
    <property type="entry name" value="S-METHYL-5'-THIOADENOSINE PHOSPHORYLASE"/>
    <property type="match status" value="1"/>
</dbReference>
<dbReference type="Pfam" id="PF01048">
    <property type="entry name" value="PNP_UDP_1"/>
    <property type="match status" value="1"/>
</dbReference>
<dbReference type="SUPFAM" id="SSF53167">
    <property type="entry name" value="Purine and uridine phosphorylases"/>
    <property type="match status" value="1"/>
</dbReference>
<dbReference type="PROSITE" id="PS01240">
    <property type="entry name" value="PNP_MTAP_2"/>
    <property type="match status" value="1"/>
</dbReference>
<accession>Q3MHF7</accession>
<accession>F1N1J3</accession>
<organism>
    <name type="scientific">Bos taurus</name>
    <name type="common">Bovine</name>
    <dbReference type="NCBI Taxonomy" id="9913"/>
    <lineage>
        <taxon>Eukaryota</taxon>
        <taxon>Metazoa</taxon>
        <taxon>Chordata</taxon>
        <taxon>Craniata</taxon>
        <taxon>Vertebrata</taxon>
        <taxon>Euteleostomi</taxon>
        <taxon>Mammalia</taxon>
        <taxon>Eutheria</taxon>
        <taxon>Laurasiatheria</taxon>
        <taxon>Artiodactyla</taxon>
        <taxon>Ruminantia</taxon>
        <taxon>Pecora</taxon>
        <taxon>Bovidae</taxon>
        <taxon>Bovinae</taxon>
        <taxon>Bos</taxon>
    </lineage>
</organism>
<feature type="chain" id="PRO_0000415112" description="S-methyl-5'-thioadenosine phosphorylase">
    <location>
        <begin position="1"/>
        <end position="283"/>
    </location>
</feature>
<feature type="binding site" evidence="2">
    <location>
        <position position="18"/>
    </location>
    <ligand>
        <name>phosphate</name>
        <dbReference type="ChEBI" id="CHEBI:43474"/>
    </ligand>
</feature>
<feature type="binding site" evidence="2">
    <location>
        <begin position="60"/>
        <end position="61"/>
    </location>
    <ligand>
        <name>phosphate</name>
        <dbReference type="ChEBI" id="CHEBI:43474"/>
    </ligand>
</feature>
<feature type="binding site" evidence="2">
    <location>
        <begin position="93"/>
        <end position="94"/>
    </location>
    <ligand>
        <name>phosphate</name>
        <dbReference type="ChEBI" id="CHEBI:43474"/>
    </ligand>
</feature>
<feature type="binding site" evidence="2">
    <location>
        <position position="196"/>
    </location>
    <ligand>
        <name>substrate</name>
    </ligand>
</feature>
<feature type="binding site" evidence="2">
    <location>
        <position position="197"/>
    </location>
    <ligand>
        <name>phosphate</name>
        <dbReference type="ChEBI" id="CHEBI:43474"/>
    </ligand>
</feature>
<feature type="binding site" evidence="2">
    <location>
        <begin position="220"/>
        <end position="222"/>
    </location>
    <ligand>
        <name>substrate</name>
    </ligand>
</feature>
<feature type="site" description="Important for substrate specificity" evidence="2">
    <location>
        <position position="178"/>
    </location>
</feature>
<feature type="site" description="Important for substrate specificity" evidence="2">
    <location>
        <position position="233"/>
    </location>
</feature>
<feature type="modified residue" description="N6-acetyllysine" evidence="1">
    <location>
        <position position="51"/>
    </location>
</feature>
<comment type="function">
    <text evidence="2 3">Catalyzes the reversible phosphorylation of S-methyl-5'-thioadenosine (MTA) to adenine and 5-methylthioribose-1-phosphate. Involved in the breakdown of MTA, a major by-product of polyamine biosynthesis. Responsible for the first step in the methionine salvage pathway after MTA has been generated from S-adenosylmethionine. Has broad substrate specificity with 6-aminopurine nucleosides as preferred substrates.</text>
</comment>
<comment type="catalytic activity">
    <reaction evidence="2">
        <text>S-methyl-5'-thioadenosine + phosphate = 5-(methylsulfanyl)-alpha-D-ribose 1-phosphate + adenine</text>
        <dbReference type="Rhea" id="RHEA:11852"/>
        <dbReference type="ChEBI" id="CHEBI:16708"/>
        <dbReference type="ChEBI" id="CHEBI:17509"/>
        <dbReference type="ChEBI" id="CHEBI:43474"/>
        <dbReference type="ChEBI" id="CHEBI:58533"/>
        <dbReference type="EC" id="2.4.2.28"/>
    </reaction>
</comment>
<comment type="pathway">
    <text evidence="2">Amino-acid biosynthesis; L-methionine biosynthesis via salvage pathway; S-methyl-5-thio-alpha-D-ribose 1-phosphate from S-methyl-5'-thioadenosine (phosphorylase route): step 1/1.</text>
</comment>
<comment type="subunit">
    <text evidence="2">Homotrimer.</text>
</comment>
<comment type="subcellular location">
    <subcellularLocation>
        <location evidence="2">Cytoplasm</location>
    </subcellularLocation>
    <subcellularLocation>
        <location evidence="2">Nucleus</location>
    </subcellularLocation>
</comment>
<comment type="similarity">
    <text evidence="2">Belongs to the PNP/MTAP phosphorylase family. MTAP subfamily.</text>
</comment>
<reference key="1">
    <citation type="journal article" date="2009" name="Genome Biol.">
        <title>A whole-genome assembly of the domestic cow, Bos taurus.</title>
        <authorList>
            <person name="Zimin A.V."/>
            <person name="Delcher A.L."/>
            <person name="Florea L."/>
            <person name="Kelley D.R."/>
            <person name="Schatz M.C."/>
            <person name="Puiu D."/>
            <person name="Hanrahan F."/>
            <person name="Pertea G."/>
            <person name="Van Tassell C.P."/>
            <person name="Sonstegard T.S."/>
            <person name="Marcais G."/>
            <person name="Roberts M."/>
            <person name="Subramanian P."/>
            <person name="Yorke J.A."/>
            <person name="Salzberg S.L."/>
        </authorList>
    </citation>
    <scope>NUCLEOTIDE SEQUENCE [LARGE SCALE GENOMIC DNA]</scope>
    <source>
        <strain>Hereford</strain>
    </source>
</reference>
<reference key="2">
    <citation type="submission" date="2005-09" db="EMBL/GenBank/DDBJ databases">
        <authorList>
            <consortium name="NIH - Mammalian Gene Collection (MGC) project"/>
        </authorList>
    </citation>
    <scope>NUCLEOTIDE SEQUENCE [LARGE SCALE MRNA]</scope>
    <source>
        <strain>Hereford</strain>
        <tissue>Ascending colon</tissue>
    </source>
</reference>
<reference key="3">
    <citation type="journal article" date="1990" name="J. Biol. Chem.">
        <title>Physicochemical and immunological studies on mammalian 5'-deoxy-5'-methylthioadenosine phosphorylase.</title>
        <authorList>
            <person name="Della Ragione F."/>
            <person name="Oliva A."/>
            <person name="Gragnaniello V."/>
            <person name="Russo G.L."/>
            <person name="Palumbo R."/>
            <person name="Zappia V."/>
        </authorList>
    </citation>
    <scope>FUNCTION</scope>
    <scope>SUBUNIT</scope>
</reference>
<sequence length="283" mass="31256">MSSGATPAAVKIGIIGGTGLDDPEILEGRTEKYVDTPFGKPSDALVLGKIKNVDCVLLARHGRQHTIMPSKVNYQANIWALKEEGCTHVIVTTACGSLKEEIQPGDIIIIDQFIDRTTRRLQTFYDGNHSCARGVCHIPMAEPFCPKTREVLIETAKKLGLRCHSKGTMITIEGPRFSSRAESIMFQTWGADVINMTTVPEVVLAKEAGICYASIAMATDYDCWKEHEEAVSVDRVLKTLKENANKAKSLLLTTIPQIGSMEWSETLHNMKKMAQFSVLLPRH</sequence>